<sequence>MSQEPEPGAMPYSPADDPSPLDLSLGSTSRRKKRKSHDIPNSPSKHPFPDGLSEEEKQKLERRRKRNRDAARRRRRKQTDYVDKLHEACEELQRANEHLRKEIRDLRTECTSLRVQLACHEPVCPMAVPLTVTLGLLTTPHDPVPEPPICTPPPPSPDEPNAPHCSGSQPPICTPPPPDTEELCAQLCSTPPPPISTPHIIYAPGPSPLQPPICTPAPPDAEELCAQLCSTPPPPICTPHSLFCPPQPPSPEGIFPALCPVTEPCTPPSPGTVYAQLCPVGQVPLFTPSPPHPAPEPERLYARLTEDPEQDSLYSGQIYTQFPSDTQSTVWWFPGDGRP</sequence>
<dbReference type="EMBL" id="AF243438">
    <property type="protein sequence ID" value="AAG14255.1"/>
    <property type="molecule type" value="Genomic_DNA"/>
</dbReference>
<dbReference type="EMBL" id="AF243438">
    <property type="protein sequence ID" value="AAG14278.1"/>
    <property type="molecule type" value="Genomic_DNA"/>
</dbReference>
<dbReference type="RefSeq" id="YP_001033919.1">
    <property type="nucleotide sequence ID" value="NC_002229.3"/>
</dbReference>
<dbReference type="RefSeq" id="YP_001033993.1">
    <property type="nucleotide sequence ID" value="NC_002229.3"/>
</dbReference>
<dbReference type="SMR" id="Q9DGW5"/>
<dbReference type="DIP" id="DIP-61102N"/>
<dbReference type="IntAct" id="Q9DGW5">
    <property type="interactions" value="19"/>
</dbReference>
<dbReference type="iPTMnet" id="Q9DGW5"/>
<dbReference type="GeneID" id="4811549"/>
<dbReference type="GeneID" id="4811550"/>
<dbReference type="KEGG" id="vg:4811549"/>
<dbReference type="KEGG" id="vg:4811550"/>
<dbReference type="Proteomes" id="UP000008072">
    <property type="component" value="Segment"/>
</dbReference>
<dbReference type="GO" id="GO:0044196">
    <property type="term" value="C:host cell nucleolus"/>
    <property type="evidence" value="ECO:0007669"/>
    <property type="project" value="UniProtKB-SubCell"/>
</dbReference>
<dbReference type="GO" id="GO:0042025">
    <property type="term" value="C:host cell nucleus"/>
    <property type="evidence" value="ECO:0000314"/>
    <property type="project" value="AgBase"/>
</dbReference>
<dbReference type="GO" id="GO:0000981">
    <property type="term" value="F:DNA-binding transcription factor activity, RNA polymerase II-specific"/>
    <property type="evidence" value="ECO:0007669"/>
    <property type="project" value="TreeGrafter"/>
</dbReference>
<dbReference type="GO" id="GO:0030544">
    <property type="term" value="F:Hsp70 protein binding"/>
    <property type="evidence" value="ECO:0000353"/>
    <property type="project" value="AgBase"/>
</dbReference>
<dbReference type="GO" id="GO:0042802">
    <property type="term" value="F:identical protein binding"/>
    <property type="evidence" value="ECO:0000304"/>
    <property type="project" value="AgBase"/>
</dbReference>
<dbReference type="GO" id="GO:0000978">
    <property type="term" value="F:RNA polymerase II cis-regulatory region sequence-specific DNA binding"/>
    <property type="evidence" value="ECO:0007669"/>
    <property type="project" value="TreeGrafter"/>
</dbReference>
<dbReference type="GO" id="GO:0043565">
    <property type="term" value="F:sequence-specific DNA binding"/>
    <property type="evidence" value="ECO:0000314"/>
    <property type="project" value="AgBase"/>
</dbReference>
<dbReference type="GO" id="GO:0008134">
    <property type="term" value="F:transcription factor binding"/>
    <property type="evidence" value="ECO:0000314"/>
    <property type="project" value="AgBase"/>
</dbReference>
<dbReference type="GO" id="GO:0032897">
    <property type="term" value="P:negative regulation of viral transcription"/>
    <property type="evidence" value="ECO:0000315"/>
    <property type="project" value="AgBase"/>
</dbReference>
<dbReference type="GO" id="GO:2000144">
    <property type="term" value="P:positive regulation of DNA-templated transcription initiation"/>
    <property type="evidence" value="ECO:0000314"/>
    <property type="project" value="AgBase"/>
</dbReference>
<dbReference type="GO" id="GO:0046719">
    <property type="term" value="P:regulation by virus of viral protein levels in host cell"/>
    <property type="evidence" value="ECO:0000304"/>
    <property type="project" value="AgBase"/>
</dbReference>
<dbReference type="GO" id="GO:0039645">
    <property type="term" value="P:symbiont-mediated perturbation of host cell cycle G1/S transition checkpoint"/>
    <property type="evidence" value="ECO:0007669"/>
    <property type="project" value="UniProtKB-KW"/>
</dbReference>
<dbReference type="GO" id="GO:0052026">
    <property type="term" value="P:symbiont-mediated perturbation of host transcription"/>
    <property type="evidence" value="ECO:0000314"/>
    <property type="project" value="AgBase"/>
</dbReference>
<dbReference type="GO" id="GO:0033668">
    <property type="term" value="P:symbiont-mediated suppression of host apoptosis"/>
    <property type="evidence" value="ECO:0000269"/>
    <property type="project" value="SigSci"/>
</dbReference>
<dbReference type="FunFam" id="1.20.5.170:FF:000122">
    <property type="entry name" value="Oncoprotein MEQ"/>
    <property type="match status" value="1"/>
</dbReference>
<dbReference type="Gene3D" id="1.20.5.170">
    <property type="match status" value="1"/>
</dbReference>
<dbReference type="InterPro" id="IPR000837">
    <property type="entry name" value="AP-1"/>
</dbReference>
<dbReference type="InterPro" id="IPR004827">
    <property type="entry name" value="bZIP"/>
</dbReference>
<dbReference type="InterPro" id="IPR046347">
    <property type="entry name" value="bZIP_sf"/>
</dbReference>
<dbReference type="PANTHER" id="PTHR23351:SF24">
    <property type="entry name" value="ACTIVATING TRANSCRIPTION FACTOR 3-RELATED"/>
    <property type="match status" value="1"/>
</dbReference>
<dbReference type="PANTHER" id="PTHR23351">
    <property type="entry name" value="FOS TRANSCRIPTION FACTOR-RELATED"/>
    <property type="match status" value="1"/>
</dbReference>
<dbReference type="Pfam" id="PF00170">
    <property type="entry name" value="bZIP_1"/>
    <property type="match status" value="1"/>
</dbReference>
<dbReference type="PRINTS" id="PR00042">
    <property type="entry name" value="LEUZIPPRFOS"/>
</dbReference>
<dbReference type="SMART" id="SM00338">
    <property type="entry name" value="BRLZ"/>
    <property type="match status" value="1"/>
</dbReference>
<dbReference type="SUPFAM" id="SSF57959">
    <property type="entry name" value="Leucine zipper domain"/>
    <property type="match status" value="1"/>
</dbReference>
<dbReference type="PROSITE" id="PS50217">
    <property type="entry name" value="BZIP"/>
    <property type="match status" value="1"/>
</dbReference>
<dbReference type="PROSITE" id="PS00036">
    <property type="entry name" value="BZIP_BASIC"/>
    <property type="match status" value="1"/>
</dbReference>
<organism>
    <name type="scientific">Gallid herpesvirus 2 (strain Chicken/Md5/ATCC VR-987)</name>
    <name type="common">GaHV-2</name>
    <name type="synonym">Marek's disease herpesvirus type 1</name>
    <dbReference type="NCBI Taxonomy" id="10389"/>
    <lineage>
        <taxon>Viruses</taxon>
        <taxon>Duplodnaviria</taxon>
        <taxon>Heunggongvirae</taxon>
        <taxon>Peploviricota</taxon>
        <taxon>Herviviricetes</taxon>
        <taxon>Herpesvirales</taxon>
        <taxon>Orthoherpesviridae</taxon>
        <taxon>Alphaherpesvirinae</taxon>
        <taxon>Mardivirus</taxon>
        <taxon>Mardivirus gallidalpha2</taxon>
        <taxon>Gallid alphaherpesvirus 2</taxon>
    </lineage>
</organism>
<feature type="chain" id="PRO_0000406419" description="Oncoprotein MEQ">
    <location>
        <begin position="1"/>
        <end position="339"/>
    </location>
</feature>
<feature type="domain" description="bZIP" evidence="1">
    <location>
        <begin position="57"/>
        <end position="120"/>
    </location>
</feature>
<feature type="region of interest" description="Disordered" evidence="2">
    <location>
        <begin position="1"/>
        <end position="80"/>
    </location>
</feature>
<feature type="region of interest" description="Basic motif" evidence="1">
    <location>
        <begin position="57"/>
        <end position="84"/>
    </location>
</feature>
<feature type="region of interest" description="Leucine-zipper" evidence="1">
    <location>
        <begin position="85"/>
        <end position="113"/>
    </location>
</feature>
<feature type="region of interest" description="Transactivation domain">
    <location>
        <begin position="120"/>
        <end position="339"/>
    </location>
</feature>
<feature type="region of interest" description="Disordered" evidence="2">
    <location>
        <begin position="145"/>
        <end position="172"/>
    </location>
</feature>
<feature type="short sequence motif" description="Nuclear localization signal">
    <location>
        <begin position="62"/>
        <end position="78"/>
    </location>
</feature>
<feature type="compositionally biased region" description="Basic residues" evidence="2">
    <location>
        <begin position="60"/>
        <end position="77"/>
    </location>
</feature>
<feature type="compositionally biased region" description="Pro residues" evidence="2">
    <location>
        <begin position="145"/>
        <end position="160"/>
    </location>
</feature>
<feature type="modified residue" description="Phosphoserine; by host CDK2" evidence="3">
    <location>
        <position position="42"/>
    </location>
</feature>
<feature type="mutagenesis site" description="About 95% loss of phosphorylation by host CDK2." evidence="3">
    <original>S</original>
    <variation>G</variation>
    <location>
        <position position="42"/>
    </location>
</feature>
<evidence type="ECO:0000255" key="1">
    <source>
        <dbReference type="PROSITE-ProRule" id="PRU00978"/>
    </source>
</evidence>
<evidence type="ECO:0000256" key="2">
    <source>
        <dbReference type="SAM" id="MobiDB-lite"/>
    </source>
</evidence>
<evidence type="ECO:0000269" key="3">
    <source>
    </source>
</evidence>
<evidence type="ECO:0000269" key="4">
    <source>
    </source>
</evidence>
<evidence type="ECO:0000269" key="5">
    <source>
    </source>
</evidence>
<evidence type="ECO:0000269" key="6">
    <source>
    </source>
</evidence>
<evidence type="ECO:0000269" key="7">
    <source>
    </source>
</evidence>
<evidence type="ECO:0000305" key="8"/>
<accession>Q9DGW5</accession>
<keyword id="KW-0238">DNA-binding</keyword>
<keyword id="KW-1078">G1/S host cell cycle checkpoint dysregulation by virus</keyword>
<keyword id="KW-1048">Host nucleus</keyword>
<keyword id="KW-0945">Host-virus interaction</keyword>
<keyword id="KW-1119">Modulation of host cell apoptosis by virus</keyword>
<keyword id="KW-1121">Modulation of host cell cycle by virus</keyword>
<keyword id="KW-0597">Phosphoprotein</keyword>
<keyword id="KW-1185">Reference proteome</keyword>
<keyword id="KW-0804">Transcription</keyword>
<keyword id="KW-0805">Transcription regulation</keyword>
<name>MEQ_GAHVM</name>
<gene>
    <name type="primary">MDV005</name>
    <name type="synonym">MDV076</name>
</gene>
<proteinExistence type="evidence at protein level"/>
<reference key="1">
    <citation type="journal article" date="2000" name="J. Virol.">
        <title>The genome of a very virulent Marek's disease virus.</title>
        <authorList>
            <person name="Tulman E.R."/>
            <person name="Afonso C.L."/>
            <person name="Lu Z."/>
            <person name="Zsak L."/>
            <person name="Rock D.L."/>
            <person name="Kutish G.F."/>
        </authorList>
    </citation>
    <scope>NUCLEOTIDE SEQUENCE [LARGE SCALE GENOMIC DNA]</scope>
</reference>
<reference key="2">
    <citation type="journal article" date="1995" name="J. Virol.">
        <title>Transactivation activity of Meq, a Marek's disease herpesvirus bZIP protein persistently expressed in latently infected transformed T cells.</title>
        <authorList>
            <person name="Qian Z."/>
            <person name="Brunovskis P."/>
            <person name="Rauscher F. III"/>
            <person name="Lee L."/>
            <person name="Kung H.J."/>
        </authorList>
    </citation>
    <scope>INTERACTION WITH HOST JUN</scope>
</reference>
<reference key="3">
    <citation type="journal article" date="1997" name="J. Virol.">
        <title>Nucleolar and nuclear localization properties of a herpesvirus bZIP oncoprotein, MEQ.</title>
        <authorList>
            <person name="Liu J.L."/>
            <person name="Lee L.F."/>
            <person name="Ye Y."/>
            <person name="Qian Z."/>
            <person name="Kung H.J."/>
        </authorList>
    </citation>
    <scope>SUBCELLULAR LOCATION</scope>
</reference>
<reference key="4">
    <citation type="journal article" date="1998" name="J. Virol.">
        <title>Transforming potential of the herpesvirus oncoprotein MEQ: morphological transformation, serum-independent growth, and inhibition of apoptosis.</title>
        <authorList>
            <person name="Liu J.L."/>
            <person name="Ye Y."/>
            <person name="Lee L.F."/>
            <person name="Kung H.J."/>
        </authorList>
    </citation>
    <scope>FUNCTION</scope>
</reference>
<reference key="5">
    <citation type="journal article" date="1999" name="J. Virol.">
        <title>Functional interactions between herpesvirus oncoprotein MEQ and cell cycle regulator CDK2.</title>
        <authorList>
            <person name="Liu J.L."/>
            <person name="Ye Y."/>
            <person name="Qian Z."/>
            <person name="Qian Y."/>
            <person name="Templeton D.J."/>
            <person name="Lee L.F."/>
            <person name="Kung H.J."/>
        </authorList>
    </citation>
    <scope>SUBCELLULAR LOCATION</scope>
    <scope>PHOSPHORYLATION AT SER-42 BY HOST CDK2</scope>
    <scope>MUTAGENESIS OF SER-42</scope>
</reference>
<reference key="6">
    <citation type="journal article" date="2000" name="Virus Genes">
        <title>Marek's disease herpesvirus transforming protein MEQ: a c-Jun analogue with an alternative life style.</title>
        <authorList>
            <person name="Liu J.L."/>
            <person name="Kung H.J."/>
        </authorList>
    </citation>
    <scope>REVIEW</scope>
</reference>
<reference key="7">
    <citation type="journal article" date="2009" name="J. Virol.">
        <title>Homodimerization of the Meq viral oncoprotein is necessary for induction of T-cell lymphoma by Marek's disease virus.</title>
        <authorList>
            <person name="Brown A.C."/>
            <person name="Smith L.P."/>
            <person name="Kgosana L."/>
            <person name="Baigent S.J."/>
            <person name="Nair V."/>
            <person name="Allday M.J."/>
        </authorList>
    </citation>
    <scope>SUBUNIT</scope>
</reference>
<organismHost>
    <name type="scientific">Gallus gallus</name>
    <name type="common">Chicken</name>
    <dbReference type="NCBI Taxonomy" id="9031"/>
</organismHost>
<protein>
    <recommendedName>
        <fullName>Oncoprotein MEQ</fullName>
        <shortName>MEQ</shortName>
    </recommendedName>
</protein>
<comment type="function">
    <text evidence="7">Functions as a DNA-binding transcription factor. Promotes transformation, host cell growth, host cell-cycle progression through G1/S phase, and possesses antiapoptotic activity. Forms functional heterodimers with host JUN. These heterodimers bind with high affinity DNA sequences called MEQ-responsive elements MERE I (TGACA/GTCA), while MEQ homodimers bind a second type of sites termed MERE II (ACACA). Both homo and heterodimerization of MEQ are required for oncogenesis.</text>
</comment>
<comment type="subunit">
    <text evidence="4 5">Homodimer. Interacts with host JUN; this interaction allows MEQ to engage in host cell processes by disguising itself as a cellular JUN.</text>
</comment>
<comment type="interaction">
    <interactant intactId="EBI-10889526">
        <id>Q9DGW5</id>
    </interactant>
    <interactant intactId="EBI-852794">
        <id>P18846</id>
        <label>ATF1</label>
    </interactant>
    <organismsDiffer>true</organismsDiffer>
    <experiments>2</experiments>
</comment>
<comment type="interaction">
    <interactant intactId="EBI-10889526">
        <id>Q9DGW5</id>
    </interactant>
    <interactant intactId="EBI-1170906">
        <id>P15336</id>
        <label>ATF2</label>
    </interactant>
    <organismsDiffer>true</organismsDiffer>
    <experiments>2</experiments>
</comment>
<comment type="interaction">
    <interactant intactId="EBI-10889526">
        <id>Q9DGW5</id>
    </interactant>
    <interactant intactId="EBI-765623">
        <id>P17544</id>
        <label>ATF7</label>
    </interactant>
    <organismsDiffer>true</organismsDiffer>
    <experiments>2</experiments>
</comment>
<comment type="interaction">
    <interactant intactId="EBI-10889526">
        <id>Q9DGW5</id>
    </interactant>
    <interactant intactId="EBI-1263541">
        <id>O14867</id>
        <label>BACH1</label>
    </interactant>
    <organismsDiffer>true</organismsDiffer>
    <experiments>2</experiments>
</comment>
<comment type="interaction">
    <interactant intactId="EBI-10889526">
        <id>Q9DGW5</id>
    </interactant>
    <interactant intactId="EBI-711855">
        <id>P16220</id>
        <label>CREB1</label>
    </interactant>
    <organismsDiffer>true</organismsDiffer>
    <experiments>2</experiments>
</comment>
<comment type="interaction">
    <interactant intactId="EBI-10889526">
        <id>Q9DGW5</id>
    </interactant>
    <interactant intactId="EBI-10889881">
        <id>Q5ZIZ6</id>
        <label>CTBP1</label>
    </interactant>
    <organismsDiffer>true</organismsDiffer>
    <experiments>3</experiments>
</comment>
<comment type="interaction">
    <interactant intactId="EBI-10889526">
        <id>Q9DGW5</id>
    </interactant>
    <interactant intactId="EBI-10890294">
        <id>P0C746</id>
        <label>HBZ</label>
    </interactant>
    <organismsDiffer>true</organismsDiffer>
    <experiments>2</experiments>
</comment>
<comment type="interaction">
    <interactant intactId="EBI-10889526">
        <id>Q9DGW5</id>
    </interactant>
    <interactant intactId="EBI-852823">
        <id>P05412</id>
        <label>JUN</label>
    </interactant>
    <organismsDiffer>true</organismsDiffer>
    <experiments>3</experiments>
</comment>
<comment type="interaction">
    <interactant intactId="EBI-10889526">
        <id>Q9DGW5</id>
    </interactant>
    <interactant intactId="EBI-445826">
        <id>P18870</id>
        <label>JUN</label>
    </interactant>
    <organismsDiffer>true</organismsDiffer>
    <experiments>5</experiments>
</comment>
<comment type="interaction">
    <interactant intactId="EBI-10889526">
        <id>Q9DGW5</id>
    </interactant>
    <interactant intactId="EBI-5347760">
        <id>P09450</id>
        <label>Junb</label>
    </interactant>
    <organismsDiffer>true</organismsDiffer>
    <experiments>2</experiments>
</comment>
<comment type="interaction">
    <interactant intactId="EBI-10889526">
        <id>Q9DGW5</id>
    </interactant>
    <interactant intactId="EBI-748062">
        <id>P17275</id>
        <label>JUNB</label>
    </interactant>
    <organismsDiffer>true</organismsDiffer>
    <experiments>2</experiments>
</comment>
<comment type="interaction">
    <interactant intactId="EBI-10889526">
        <id>Q9DGW5</id>
    </interactant>
    <interactant intactId="EBI-2682803">
        <id>P17535</id>
        <label>JUND</label>
    </interactant>
    <organismsDiffer>true</organismsDiffer>
    <experiments>2</experiments>
</comment>
<comment type="interaction">
    <interactant intactId="EBI-10889526">
        <id>Q9DGW5</id>
    </interactant>
    <interactant intactId="EBI-726369">
        <id>Q16621</id>
        <label>NFE2</label>
    </interactant>
    <organismsDiffer>true</organismsDiffer>
    <experiments>2</experiments>
</comment>
<comment type="interaction">
    <interactant intactId="EBI-10889526">
        <id>Q9DGW5</id>
    </interactant>
    <interactant intactId="EBI-3951858">
        <id>Q16649</id>
        <label>NFIL3</label>
    </interactant>
    <organismsDiffer>true</organismsDiffer>
    <experiments>3</experiments>
</comment>
<comment type="interaction">
    <interactant intactId="EBI-10889526">
        <id>Q9DGW5</id>
    </interactant>
    <interactant intactId="EBI-1636307">
        <id>P08106</id>
    </interactant>
    <organismsDiffer>true</organismsDiffer>
    <experiments>5</experiments>
</comment>
<comment type="subcellular location">
    <subcellularLocation>
        <location evidence="3 6">Host nucleus</location>
        <location evidence="3 6">Host nucleolus</location>
    </subcellularLocation>
    <text>Expressed in both the nucleus and the cytoplasm during the G1/S boundary and early S phase of host cell cycle.</text>
</comment>
<comment type="PTM">
    <text evidence="3">Phosphorylated by host CDK2; this phosphorylation greatly reduces the DNA binding activity of MEQ.</text>
</comment>
<comment type="similarity">
    <text evidence="8">Belongs to the bZIP family. Jun subfamily.</text>
</comment>